<proteinExistence type="inferred from homology"/>
<protein>
    <recommendedName>
        <fullName evidence="1">L-rhamnose mutarotase</fullName>
        <ecNumber evidence="1">5.1.3.32</ecNumber>
    </recommendedName>
    <alternativeName>
        <fullName evidence="1">Rhamnose 1-epimerase</fullName>
    </alternativeName>
    <alternativeName>
        <fullName evidence="1">Type-3 mutarotase</fullName>
    </alternativeName>
</protein>
<sequence>MLRKAFVMSVFPDCHDDYQRRHNPIWPELAEVLKNHGAHHYSIFLDKQRNLLFGYVEVESEARWEAIAQTEVCQRWWKYMSDVMPSNPDNSPVSEALEPVFYLD</sequence>
<organism>
    <name type="scientific">Pectobacterium carotovorum subsp. carotovorum (strain PC1)</name>
    <dbReference type="NCBI Taxonomy" id="561230"/>
    <lineage>
        <taxon>Bacteria</taxon>
        <taxon>Pseudomonadati</taxon>
        <taxon>Pseudomonadota</taxon>
        <taxon>Gammaproteobacteria</taxon>
        <taxon>Enterobacterales</taxon>
        <taxon>Pectobacteriaceae</taxon>
        <taxon>Pectobacterium</taxon>
    </lineage>
</organism>
<feature type="chain" id="PRO_1000215873" description="L-rhamnose mutarotase">
    <location>
        <begin position="1"/>
        <end position="104"/>
    </location>
</feature>
<feature type="active site" description="Proton donor" evidence="1">
    <location>
        <position position="22"/>
    </location>
</feature>
<feature type="binding site" evidence="1">
    <location>
        <position position="18"/>
    </location>
    <ligand>
        <name>substrate</name>
    </ligand>
</feature>
<feature type="binding site" evidence="1">
    <location>
        <position position="41"/>
    </location>
    <ligand>
        <name>substrate</name>
    </ligand>
</feature>
<feature type="binding site" evidence="1">
    <location>
        <begin position="76"/>
        <end position="77"/>
    </location>
    <ligand>
        <name>substrate</name>
    </ligand>
</feature>
<comment type="function">
    <text evidence="1">Involved in the anomeric conversion of L-rhamnose.</text>
</comment>
<comment type="catalytic activity">
    <reaction evidence="1">
        <text>alpha-L-rhamnose = beta-L-rhamnose</text>
        <dbReference type="Rhea" id="RHEA:25584"/>
        <dbReference type="ChEBI" id="CHEBI:27586"/>
        <dbReference type="ChEBI" id="CHEBI:27907"/>
        <dbReference type="EC" id="5.1.3.32"/>
    </reaction>
</comment>
<comment type="pathway">
    <text evidence="1">Carbohydrate metabolism; L-rhamnose metabolism.</text>
</comment>
<comment type="subunit">
    <text evidence="1">Homodimer.</text>
</comment>
<comment type="subcellular location">
    <subcellularLocation>
        <location evidence="1">Cytoplasm</location>
    </subcellularLocation>
</comment>
<comment type="similarity">
    <text evidence="1">Belongs to the rhamnose mutarotase family.</text>
</comment>
<evidence type="ECO:0000255" key="1">
    <source>
        <dbReference type="HAMAP-Rule" id="MF_01663"/>
    </source>
</evidence>
<keyword id="KW-0119">Carbohydrate metabolism</keyword>
<keyword id="KW-0963">Cytoplasm</keyword>
<keyword id="KW-0413">Isomerase</keyword>
<keyword id="KW-0684">Rhamnose metabolism</keyword>
<reference key="1">
    <citation type="submission" date="2009-07" db="EMBL/GenBank/DDBJ databases">
        <title>Complete sequence of Pectobacterium carotovorum subsp. carotovorum PC1.</title>
        <authorList>
            <consortium name="US DOE Joint Genome Institute"/>
            <person name="Lucas S."/>
            <person name="Copeland A."/>
            <person name="Lapidus A."/>
            <person name="Glavina del Rio T."/>
            <person name="Tice H."/>
            <person name="Bruce D."/>
            <person name="Goodwin L."/>
            <person name="Pitluck S."/>
            <person name="Munk A.C."/>
            <person name="Brettin T."/>
            <person name="Detter J.C."/>
            <person name="Han C."/>
            <person name="Tapia R."/>
            <person name="Larimer F."/>
            <person name="Land M."/>
            <person name="Hauser L."/>
            <person name="Kyrpides N."/>
            <person name="Mikhailova N."/>
            <person name="Balakrishnan V."/>
            <person name="Glasner J."/>
            <person name="Perna N.T."/>
        </authorList>
    </citation>
    <scope>NUCLEOTIDE SEQUENCE [LARGE SCALE GENOMIC DNA]</scope>
    <source>
        <strain>PC1</strain>
    </source>
</reference>
<dbReference type="EC" id="5.1.3.32" evidence="1"/>
<dbReference type="EMBL" id="CP001657">
    <property type="protein sequence ID" value="ACT11473.1"/>
    <property type="molecule type" value="Genomic_DNA"/>
</dbReference>
<dbReference type="RefSeq" id="WP_012773129.1">
    <property type="nucleotide sequence ID" value="NC_012917.1"/>
</dbReference>
<dbReference type="SMR" id="C6DJR0"/>
<dbReference type="STRING" id="561230.PC1_0417"/>
<dbReference type="KEGG" id="pct:PC1_0417"/>
<dbReference type="eggNOG" id="COG3254">
    <property type="taxonomic scope" value="Bacteria"/>
</dbReference>
<dbReference type="HOGENOM" id="CLU_100689_2_0_6"/>
<dbReference type="OrthoDB" id="9799608at2"/>
<dbReference type="UniPathway" id="UPA00125"/>
<dbReference type="Proteomes" id="UP000002736">
    <property type="component" value="Chromosome"/>
</dbReference>
<dbReference type="GO" id="GO:0005737">
    <property type="term" value="C:cytoplasm"/>
    <property type="evidence" value="ECO:0007669"/>
    <property type="project" value="UniProtKB-SubCell"/>
</dbReference>
<dbReference type="GO" id="GO:0062192">
    <property type="term" value="F:L-rhamnose mutarotase activity"/>
    <property type="evidence" value="ECO:0007669"/>
    <property type="project" value="UniProtKB-EC"/>
</dbReference>
<dbReference type="GO" id="GO:0019301">
    <property type="term" value="P:rhamnose catabolic process"/>
    <property type="evidence" value="ECO:0007669"/>
    <property type="project" value="TreeGrafter"/>
</dbReference>
<dbReference type="Gene3D" id="3.30.70.100">
    <property type="match status" value="1"/>
</dbReference>
<dbReference type="HAMAP" id="MF_01663">
    <property type="entry name" value="L_rham_rotase"/>
    <property type="match status" value="1"/>
</dbReference>
<dbReference type="InterPro" id="IPR011008">
    <property type="entry name" value="Dimeric_a/b-barrel"/>
</dbReference>
<dbReference type="InterPro" id="IPR013448">
    <property type="entry name" value="L-rhamnose_mutarotase"/>
</dbReference>
<dbReference type="InterPro" id="IPR008000">
    <property type="entry name" value="Rham/fucose_mutarotase"/>
</dbReference>
<dbReference type="NCBIfam" id="TIGR02625">
    <property type="entry name" value="YiiL_rotase"/>
    <property type="match status" value="1"/>
</dbReference>
<dbReference type="PANTHER" id="PTHR34389">
    <property type="entry name" value="L-RHAMNOSE MUTAROTASE"/>
    <property type="match status" value="1"/>
</dbReference>
<dbReference type="PANTHER" id="PTHR34389:SF2">
    <property type="entry name" value="L-RHAMNOSE MUTAROTASE"/>
    <property type="match status" value="1"/>
</dbReference>
<dbReference type="Pfam" id="PF05336">
    <property type="entry name" value="rhaM"/>
    <property type="match status" value="1"/>
</dbReference>
<dbReference type="SUPFAM" id="SSF54909">
    <property type="entry name" value="Dimeric alpha+beta barrel"/>
    <property type="match status" value="1"/>
</dbReference>
<name>RHAM_PECCP</name>
<accession>C6DJR0</accession>
<gene>
    <name evidence="1" type="primary">rhaM</name>
    <name type="ordered locus">PC1_0417</name>
</gene>